<comment type="subcellular location">
    <subcellularLocation>
        <location evidence="2">Cell membrane</location>
        <topology evidence="2">Multi-pass membrane protein</topology>
    </subcellularLocation>
</comment>
<comment type="similarity">
    <text evidence="2">Belongs to the YggT family.</text>
</comment>
<keyword id="KW-1003">Cell membrane</keyword>
<keyword id="KW-0472">Membrane</keyword>
<keyword id="KW-1185">Reference proteome</keyword>
<keyword id="KW-0812">Transmembrane</keyword>
<keyword id="KW-1133">Transmembrane helix</keyword>
<gene>
    <name type="primary">yggT</name>
    <name type="ordered locus">c3538</name>
</gene>
<organism>
    <name type="scientific">Escherichia coli O6:H1 (strain CFT073 / ATCC 700928 / UPEC)</name>
    <dbReference type="NCBI Taxonomy" id="199310"/>
    <lineage>
        <taxon>Bacteria</taxon>
        <taxon>Pseudomonadati</taxon>
        <taxon>Pseudomonadota</taxon>
        <taxon>Gammaproteobacteria</taxon>
        <taxon>Enterobacterales</taxon>
        <taxon>Enterobacteriaceae</taxon>
        <taxon>Escherichia</taxon>
    </lineage>
</organism>
<accession>P64565</accession>
<accession>P52058</accession>
<proteinExistence type="inferred from homology"/>
<protein>
    <recommendedName>
        <fullName>Uncharacterized protein YggT</fullName>
    </recommendedName>
</protein>
<dbReference type="EMBL" id="AE014075">
    <property type="protein sequence ID" value="AAN81986.1"/>
    <property type="molecule type" value="Genomic_DNA"/>
</dbReference>
<dbReference type="RefSeq" id="WP_001094831.1">
    <property type="nucleotide sequence ID" value="NZ_CP051263.1"/>
</dbReference>
<dbReference type="STRING" id="199310.c3538"/>
<dbReference type="GeneID" id="93779045"/>
<dbReference type="KEGG" id="ecc:c3538"/>
<dbReference type="eggNOG" id="COG0762">
    <property type="taxonomic scope" value="Bacteria"/>
</dbReference>
<dbReference type="HOGENOM" id="CLU_089905_1_0_6"/>
<dbReference type="BioCyc" id="ECOL199310:C3538-MONOMER"/>
<dbReference type="Proteomes" id="UP000001410">
    <property type="component" value="Chromosome"/>
</dbReference>
<dbReference type="GO" id="GO:0005886">
    <property type="term" value="C:plasma membrane"/>
    <property type="evidence" value="ECO:0007669"/>
    <property type="project" value="UniProtKB-SubCell"/>
</dbReference>
<dbReference type="InterPro" id="IPR003425">
    <property type="entry name" value="CCB3/YggT"/>
</dbReference>
<dbReference type="PANTHER" id="PTHR33219:SF14">
    <property type="entry name" value="PROTEIN COFACTOR ASSEMBLY OF COMPLEX C SUBUNIT B CCB3, CHLOROPLASTIC-RELATED"/>
    <property type="match status" value="1"/>
</dbReference>
<dbReference type="PANTHER" id="PTHR33219">
    <property type="entry name" value="YLMG HOMOLOG PROTEIN 2, CHLOROPLASTIC"/>
    <property type="match status" value="1"/>
</dbReference>
<dbReference type="Pfam" id="PF02325">
    <property type="entry name" value="YGGT"/>
    <property type="match status" value="2"/>
</dbReference>
<name>YGGT_ECOL6</name>
<evidence type="ECO:0000255" key="1"/>
<evidence type="ECO:0000305" key="2"/>
<sequence>MNTLTFLLSTVIELYTMVLLLRIWMQWAHCDFYNPFSQFVVKVTQPIIGPLRRVIPAMGPIDSASLLVAYILSFIKAIVLFKVVTFLPIIWIAGLLILLKTIGLLIFWVLLVMAIMSWVSQGRSPIEYVLIQLADPLLRPIRRLLPAMGGIDFSPMILVLLLYVINMGVAEVLQATGNMLLPGLWMAL</sequence>
<feature type="chain" id="PRO_0000169377" description="Uncharacterized protein YggT">
    <location>
        <begin position="1"/>
        <end position="188"/>
    </location>
</feature>
<feature type="transmembrane region" description="Helical" evidence="1">
    <location>
        <begin position="1"/>
        <end position="21"/>
    </location>
</feature>
<feature type="transmembrane region" description="Helical" evidence="1">
    <location>
        <begin position="67"/>
        <end position="87"/>
    </location>
</feature>
<feature type="transmembrane region" description="Helical" evidence="1">
    <location>
        <begin position="89"/>
        <end position="109"/>
    </location>
</feature>
<feature type="transmembrane region" description="Helical" evidence="1">
    <location>
        <begin position="145"/>
        <end position="165"/>
    </location>
</feature>
<feature type="transmembrane region" description="Helical" evidence="1">
    <location>
        <begin position="168"/>
        <end position="188"/>
    </location>
</feature>
<reference key="1">
    <citation type="journal article" date="2002" name="Proc. Natl. Acad. Sci. U.S.A.">
        <title>Extensive mosaic structure revealed by the complete genome sequence of uropathogenic Escherichia coli.</title>
        <authorList>
            <person name="Welch R.A."/>
            <person name="Burland V."/>
            <person name="Plunkett G. III"/>
            <person name="Redford P."/>
            <person name="Roesch P."/>
            <person name="Rasko D."/>
            <person name="Buckles E.L."/>
            <person name="Liou S.-R."/>
            <person name="Boutin A."/>
            <person name="Hackett J."/>
            <person name="Stroud D."/>
            <person name="Mayhew G.F."/>
            <person name="Rose D.J."/>
            <person name="Zhou S."/>
            <person name="Schwartz D.C."/>
            <person name="Perna N.T."/>
            <person name="Mobley H.L.T."/>
            <person name="Donnenberg M.S."/>
            <person name="Blattner F.R."/>
        </authorList>
    </citation>
    <scope>NUCLEOTIDE SEQUENCE [LARGE SCALE GENOMIC DNA]</scope>
    <source>
        <strain>CFT073 / ATCC 700928 / UPEC</strain>
    </source>
</reference>